<dbReference type="EC" id="1.5.3.17" evidence="1"/>
<dbReference type="EMBL" id="X81848">
    <property type="protein sequence ID" value="CAA57442.1"/>
    <property type="molecule type" value="Genomic_DNA"/>
</dbReference>
<dbReference type="EMBL" id="Z49211">
    <property type="protein sequence ID" value="CAA89122.1"/>
    <property type="molecule type" value="Genomic_DNA"/>
</dbReference>
<dbReference type="EMBL" id="BK006946">
    <property type="protein sequence ID" value="DAA09918.1"/>
    <property type="molecule type" value="Genomic_DNA"/>
</dbReference>
<dbReference type="PIR" id="S54021">
    <property type="entry name" value="S54021"/>
</dbReference>
<dbReference type="RefSeq" id="NP_013733.1">
    <property type="nucleotide sequence ID" value="NM_001182516.1"/>
</dbReference>
<dbReference type="PDB" id="1RSG">
    <property type="method" value="X-ray"/>
    <property type="resolution" value="1.90 A"/>
    <property type="chains" value="A/B=1-508"/>
</dbReference>
<dbReference type="PDB" id="1XPQ">
    <property type="method" value="X-ray"/>
    <property type="resolution" value="2.60 A"/>
    <property type="chains" value="A/B/C/D=1-508"/>
</dbReference>
<dbReference type="PDB" id="1YY5">
    <property type="method" value="X-ray"/>
    <property type="resolution" value="2.30 A"/>
    <property type="chains" value="A/B=1-508"/>
</dbReference>
<dbReference type="PDB" id="1Z6L">
    <property type="method" value="X-ray"/>
    <property type="resolution" value="2.50 A"/>
    <property type="chains" value="A/B=1-508"/>
</dbReference>
<dbReference type="PDB" id="3BI2">
    <property type="method" value="X-ray"/>
    <property type="resolution" value="2.30 A"/>
    <property type="chains" value="A/B=1-508"/>
</dbReference>
<dbReference type="PDB" id="3BI4">
    <property type="method" value="X-ray"/>
    <property type="resolution" value="2.20 A"/>
    <property type="chains" value="A/B=1-508"/>
</dbReference>
<dbReference type="PDB" id="3BI5">
    <property type="method" value="X-ray"/>
    <property type="resolution" value="2.50 A"/>
    <property type="chains" value="A/B=1-508"/>
</dbReference>
<dbReference type="PDB" id="3BNM">
    <property type="method" value="X-ray"/>
    <property type="resolution" value="2.20 A"/>
    <property type="chains" value="A/B=1-508"/>
</dbReference>
<dbReference type="PDB" id="3BNU">
    <property type="method" value="X-ray"/>
    <property type="resolution" value="2.20 A"/>
    <property type="chains" value="A/B=1-508"/>
</dbReference>
<dbReference type="PDB" id="3CN8">
    <property type="method" value="X-ray"/>
    <property type="resolution" value="2.40 A"/>
    <property type="chains" value="A/B=1-508"/>
</dbReference>
<dbReference type="PDB" id="3CND">
    <property type="method" value="X-ray"/>
    <property type="resolution" value="2.50 A"/>
    <property type="chains" value="A/B=1-508"/>
</dbReference>
<dbReference type="PDB" id="3CNP">
    <property type="method" value="X-ray"/>
    <property type="resolution" value="2.50 A"/>
    <property type="chains" value="A/B=1-508"/>
</dbReference>
<dbReference type="PDB" id="3CNS">
    <property type="method" value="X-ray"/>
    <property type="resolution" value="2.40 A"/>
    <property type="chains" value="A/B=1-508"/>
</dbReference>
<dbReference type="PDB" id="3CNT">
    <property type="method" value="X-ray"/>
    <property type="resolution" value="2.70 A"/>
    <property type="chains" value="A/B=1-508"/>
</dbReference>
<dbReference type="PDB" id="4ECH">
    <property type="method" value="X-ray"/>
    <property type="resolution" value="2.40 A"/>
    <property type="chains" value="A/B=1-508"/>
</dbReference>
<dbReference type="PDB" id="4GDP">
    <property type="method" value="X-ray"/>
    <property type="resolution" value="2.00 A"/>
    <property type="chains" value="A/B/C/D=1-508"/>
</dbReference>
<dbReference type="PDBsum" id="1RSG"/>
<dbReference type="PDBsum" id="1XPQ"/>
<dbReference type="PDBsum" id="1YY5"/>
<dbReference type="PDBsum" id="1Z6L"/>
<dbReference type="PDBsum" id="3BI2"/>
<dbReference type="PDBsum" id="3BI4"/>
<dbReference type="PDBsum" id="3BI5"/>
<dbReference type="PDBsum" id="3BNM"/>
<dbReference type="PDBsum" id="3BNU"/>
<dbReference type="PDBsum" id="3CN8"/>
<dbReference type="PDBsum" id="3CND"/>
<dbReference type="PDBsum" id="3CNP"/>
<dbReference type="PDBsum" id="3CNS"/>
<dbReference type="PDBsum" id="3CNT"/>
<dbReference type="PDBsum" id="4ECH"/>
<dbReference type="PDBsum" id="4GDP"/>
<dbReference type="SMR" id="P50264"/>
<dbReference type="BioGRID" id="35191">
    <property type="interactions" value="79"/>
</dbReference>
<dbReference type="DIP" id="DIP-3959N"/>
<dbReference type="FunCoup" id="P50264">
    <property type="interactions" value="476"/>
</dbReference>
<dbReference type="MINT" id="P50264"/>
<dbReference type="STRING" id="4932.YMR020W"/>
<dbReference type="iPTMnet" id="P50264"/>
<dbReference type="PaxDb" id="4932-YMR020W"/>
<dbReference type="PeptideAtlas" id="P50264"/>
<dbReference type="EnsemblFungi" id="YMR020W_mRNA">
    <property type="protein sequence ID" value="YMR020W"/>
    <property type="gene ID" value="YMR020W"/>
</dbReference>
<dbReference type="GeneID" id="855034"/>
<dbReference type="KEGG" id="sce:YMR020W"/>
<dbReference type="AGR" id="SGD:S000004622"/>
<dbReference type="SGD" id="S000004622">
    <property type="gene designation" value="FMS1"/>
</dbReference>
<dbReference type="VEuPathDB" id="FungiDB:YMR020W"/>
<dbReference type="eggNOG" id="KOG0029">
    <property type="taxonomic scope" value="Eukaryota"/>
</dbReference>
<dbReference type="GeneTree" id="ENSGT00940000174336"/>
<dbReference type="HOGENOM" id="CLU_004498_10_1_1"/>
<dbReference type="InParanoid" id="P50264"/>
<dbReference type="OMA" id="EFFDNYQ"/>
<dbReference type="OrthoDB" id="5046242at2759"/>
<dbReference type="BioCyc" id="MetaCyc:YMR020W-MONOMER"/>
<dbReference type="BioCyc" id="YEAST:YMR020W-MONOMER"/>
<dbReference type="BRENDA" id="1.5.3.17">
    <property type="organism ID" value="984"/>
</dbReference>
<dbReference type="Reactome" id="R-SCE-3214842">
    <property type="pathway name" value="HDMs demethylate histones"/>
</dbReference>
<dbReference type="Reactome" id="R-SCE-5625886">
    <property type="pathway name" value="Activated PKN1 stimulates transcription of AR (androgen receptor) regulated genes KLK2 and KLK3"/>
</dbReference>
<dbReference type="Reactome" id="R-SCE-9018519">
    <property type="pathway name" value="Estrogen-dependent gene expression"/>
</dbReference>
<dbReference type="BioGRID-ORCS" id="855034">
    <property type="hits" value="2 hits in 10 CRISPR screens"/>
</dbReference>
<dbReference type="EvolutionaryTrace" id="P50264"/>
<dbReference type="PRO" id="PR:P50264"/>
<dbReference type="Proteomes" id="UP000002311">
    <property type="component" value="Chromosome XIII"/>
</dbReference>
<dbReference type="RNAct" id="P50264">
    <property type="molecule type" value="protein"/>
</dbReference>
<dbReference type="GO" id="GO:0005737">
    <property type="term" value="C:cytoplasm"/>
    <property type="evidence" value="ECO:0007005"/>
    <property type="project" value="SGD"/>
</dbReference>
<dbReference type="GO" id="GO:0052903">
    <property type="term" value="F:N(1)-acetylpolyamine oxidase (3-acetamidopropanal-forming) activity"/>
    <property type="evidence" value="ECO:0007669"/>
    <property type="project" value="RHEA"/>
</dbReference>
<dbReference type="GO" id="GO:0052897">
    <property type="term" value="F:N8-acetylspermidine:oxygen oxidoreductase (propane-1,3-diamine-forming) activity"/>
    <property type="evidence" value="ECO:0007669"/>
    <property type="project" value="RHEA"/>
</dbReference>
<dbReference type="GO" id="GO:0016491">
    <property type="term" value="F:oxidoreductase activity"/>
    <property type="evidence" value="ECO:0000318"/>
    <property type="project" value="GO_Central"/>
</dbReference>
<dbReference type="GO" id="GO:0046592">
    <property type="term" value="F:polyamine oxidase activity"/>
    <property type="evidence" value="ECO:0000314"/>
    <property type="project" value="SGD"/>
</dbReference>
<dbReference type="GO" id="GO:0052901">
    <property type="term" value="F:spermine oxidase activity"/>
    <property type="evidence" value="ECO:0007669"/>
    <property type="project" value="RHEA"/>
</dbReference>
<dbReference type="GO" id="GO:0015940">
    <property type="term" value="P:pantothenate biosynthetic process"/>
    <property type="evidence" value="ECO:0000315"/>
    <property type="project" value="SGD"/>
</dbReference>
<dbReference type="GO" id="GO:0046208">
    <property type="term" value="P:spermine catabolic process"/>
    <property type="evidence" value="ECO:0000315"/>
    <property type="project" value="SGD"/>
</dbReference>
<dbReference type="Gene3D" id="3.90.660.10">
    <property type="match status" value="1"/>
</dbReference>
<dbReference type="Gene3D" id="3.50.50.60">
    <property type="entry name" value="FAD/NAD(P)-binding domain"/>
    <property type="match status" value="1"/>
</dbReference>
<dbReference type="InterPro" id="IPR002937">
    <property type="entry name" value="Amino_oxidase"/>
</dbReference>
<dbReference type="InterPro" id="IPR036188">
    <property type="entry name" value="FAD/NAD-bd_sf"/>
</dbReference>
<dbReference type="InterPro" id="IPR050281">
    <property type="entry name" value="Flavin_monoamine_oxidase"/>
</dbReference>
<dbReference type="PANTHER" id="PTHR10742">
    <property type="entry name" value="FLAVIN MONOAMINE OXIDASE"/>
    <property type="match status" value="1"/>
</dbReference>
<dbReference type="PANTHER" id="PTHR10742:SF410">
    <property type="entry name" value="LYSINE-SPECIFIC HISTONE DEMETHYLASE 2"/>
    <property type="match status" value="1"/>
</dbReference>
<dbReference type="Pfam" id="PF01593">
    <property type="entry name" value="Amino_oxidase"/>
    <property type="match status" value="1"/>
</dbReference>
<dbReference type="SUPFAM" id="SSF54373">
    <property type="entry name" value="FAD-linked reductases, C-terminal domain"/>
    <property type="match status" value="1"/>
</dbReference>
<dbReference type="SUPFAM" id="SSF51905">
    <property type="entry name" value="FAD/NAD(P)-binding domain"/>
    <property type="match status" value="1"/>
</dbReference>
<protein>
    <recommendedName>
        <fullName>Polyamine oxidase FMS1</fullName>
        <ecNumber evidence="1">1.5.3.17</ecNumber>
    </recommendedName>
    <alternativeName>
        <fullName>Fenpropimorph resistance multicopy suppressor 1</fullName>
    </alternativeName>
</protein>
<feature type="chain" id="PRO_0000087317" description="Polyamine oxidase FMS1">
    <location>
        <begin position="1"/>
        <end position="508"/>
    </location>
</feature>
<feature type="strand" evidence="5">
    <location>
        <begin position="7"/>
        <end position="14"/>
    </location>
</feature>
<feature type="helix" evidence="5">
    <location>
        <begin position="18"/>
        <end position="29"/>
    </location>
</feature>
<feature type="strand" evidence="5">
    <location>
        <begin position="34"/>
        <end position="38"/>
    </location>
</feature>
<feature type="strand" evidence="5">
    <location>
        <begin position="40"/>
        <end position="45"/>
    </location>
</feature>
<feature type="strand" evidence="5">
    <location>
        <begin position="50"/>
        <end position="52"/>
    </location>
</feature>
<feature type="helix" evidence="5">
    <location>
        <begin position="54"/>
        <end position="56"/>
    </location>
</feature>
<feature type="strand" evidence="5">
    <location>
        <begin position="58"/>
        <end position="62"/>
    </location>
</feature>
<feature type="turn" evidence="5">
    <location>
        <begin position="69"/>
        <end position="71"/>
    </location>
</feature>
<feature type="helix" evidence="5">
    <location>
        <begin position="73"/>
        <end position="85"/>
    </location>
</feature>
<feature type="strand" evidence="12">
    <location>
        <begin position="90"/>
        <end position="92"/>
    </location>
</feature>
<feature type="strand" evidence="5">
    <location>
        <begin position="98"/>
        <end position="101"/>
    </location>
</feature>
<feature type="turn" evidence="5">
    <location>
        <begin position="102"/>
        <end position="104"/>
    </location>
</feature>
<feature type="turn" evidence="5">
    <location>
        <begin position="111"/>
        <end position="113"/>
    </location>
</feature>
<feature type="helix" evidence="5">
    <location>
        <begin position="115"/>
        <end position="129"/>
    </location>
</feature>
<feature type="turn" evidence="7">
    <location>
        <begin position="131"/>
        <end position="134"/>
    </location>
</feature>
<feature type="helix" evidence="5">
    <location>
        <begin position="141"/>
        <end position="152"/>
    </location>
</feature>
<feature type="helix" evidence="5">
    <location>
        <begin position="153"/>
        <end position="155"/>
    </location>
</feature>
<feature type="helix" evidence="5">
    <location>
        <begin position="158"/>
        <end position="168"/>
    </location>
</feature>
<feature type="helix" evidence="5">
    <location>
        <begin position="169"/>
        <end position="171"/>
    </location>
</feature>
<feature type="helix" evidence="5">
    <location>
        <begin position="172"/>
        <end position="175"/>
    </location>
</feature>
<feature type="turn" evidence="5">
    <location>
        <begin position="179"/>
        <end position="181"/>
    </location>
</feature>
<feature type="helix" evidence="5">
    <location>
        <begin position="184"/>
        <end position="187"/>
    </location>
</feature>
<feature type="strand" evidence="5">
    <location>
        <begin position="196"/>
        <end position="199"/>
    </location>
</feature>
<feature type="helix" evidence="5">
    <location>
        <begin position="201"/>
        <end position="209"/>
    </location>
</feature>
<feature type="helix" evidence="5">
    <location>
        <begin position="214"/>
        <end position="216"/>
    </location>
</feature>
<feature type="strand" evidence="8">
    <location>
        <begin position="217"/>
        <end position="220"/>
    </location>
</feature>
<feature type="strand" evidence="5">
    <location>
        <begin position="223"/>
        <end position="228"/>
    </location>
</feature>
<feature type="strand" evidence="13">
    <location>
        <begin position="230"/>
        <end position="232"/>
    </location>
</feature>
<feature type="strand" evidence="5">
    <location>
        <begin position="234"/>
        <end position="238"/>
    </location>
</feature>
<feature type="strand" evidence="5">
    <location>
        <begin position="243"/>
        <end position="251"/>
    </location>
</feature>
<feature type="helix" evidence="5">
    <location>
        <begin position="255"/>
        <end position="259"/>
    </location>
</feature>
<feature type="helix" evidence="5">
    <location>
        <begin position="260"/>
        <end position="262"/>
    </location>
</feature>
<feature type="strand" evidence="11">
    <location>
        <begin position="263"/>
        <end position="265"/>
    </location>
</feature>
<feature type="strand" evidence="10">
    <location>
        <begin position="268"/>
        <end position="270"/>
    </location>
</feature>
<feature type="strand" evidence="5">
    <location>
        <begin position="273"/>
        <end position="276"/>
    </location>
</feature>
<feature type="helix" evidence="5">
    <location>
        <begin position="280"/>
        <end position="285"/>
    </location>
</feature>
<feature type="helix" evidence="13">
    <location>
        <begin position="286"/>
        <end position="288"/>
    </location>
</feature>
<feature type="strand" evidence="6">
    <location>
        <begin position="290"/>
        <end position="292"/>
    </location>
</feature>
<feature type="strand" evidence="5">
    <location>
        <begin position="295"/>
        <end position="303"/>
    </location>
</feature>
<feature type="strand" evidence="5">
    <location>
        <begin position="311"/>
        <end position="315"/>
    </location>
</feature>
<feature type="helix" evidence="5">
    <location>
        <begin position="321"/>
        <end position="329"/>
    </location>
</feature>
<feature type="helix" evidence="5">
    <location>
        <begin position="333"/>
        <end position="339"/>
    </location>
</feature>
<feature type="helix" evidence="12">
    <location>
        <begin position="353"/>
        <end position="355"/>
    </location>
</feature>
<feature type="strand" evidence="5">
    <location>
        <begin position="358"/>
        <end position="362"/>
    </location>
</feature>
<feature type="helix" evidence="5">
    <location>
        <begin position="363"/>
        <end position="366"/>
    </location>
</feature>
<feature type="strand" evidence="5">
    <location>
        <begin position="370"/>
        <end position="376"/>
    </location>
</feature>
<feature type="helix" evidence="5">
    <location>
        <begin position="380"/>
        <end position="386"/>
    </location>
</feature>
<feature type="turn" evidence="5">
    <location>
        <begin position="387"/>
        <end position="389"/>
    </location>
</feature>
<feature type="helix" evidence="5">
    <location>
        <begin position="391"/>
        <end position="408"/>
    </location>
</feature>
<feature type="helix" evidence="13">
    <location>
        <begin position="420"/>
        <end position="422"/>
    </location>
</feature>
<feature type="helix" evidence="5">
    <location>
        <begin position="424"/>
        <end position="426"/>
    </location>
</feature>
<feature type="strand" evidence="9">
    <location>
        <begin position="427"/>
        <end position="429"/>
    </location>
</feature>
<feature type="strand" evidence="5">
    <location>
        <begin position="431"/>
        <end position="437"/>
    </location>
</feature>
<feature type="turn" evidence="5">
    <location>
        <begin position="440"/>
        <end position="442"/>
    </location>
</feature>
<feature type="turn" evidence="5">
    <location>
        <begin position="444"/>
        <end position="448"/>
    </location>
</feature>
<feature type="helix" evidence="5">
    <location>
        <begin position="461"/>
        <end position="468"/>
    </location>
</feature>
<feature type="strand" evidence="5">
    <location>
        <begin position="470"/>
        <end position="476"/>
    </location>
</feature>
<feature type="helix" evidence="6">
    <location>
        <begin position="479"/>
        <end position="481"/>
    </location>
</feature>
<feature type="turn" evidence="13">
    <location>
        <begin position="484"/>
        <end position="487"/>
    </location>
</feature>
<feature type="helix" evidence="5">
    <location>
        <begin position="489"/>
        <end position="508"/>
    </location>
</feature>
<organism>
    <name type="scientific">Saccharomyces cerevisiae (strain ATCC 204508 / S288c)</name>
    <name type="common">Baker's yeast</name>
    <dbReference type="NCBI Taxonomy" id="559292"/>
    <lineage>
        <taxon>Eukaryota</taxon>
        <taxon>Fungi</taxon>
        <taxon>Dikarya</taxon>
        <taxon>Ascomycota</taxon>
        <taxon>Saccharomycotina</taxon>
        <taxon>Saccharomycetes</taxon>
        <taxon>Saccharomycetales</taxon>
        <taxon>Saccharomycetaceae</taxon>
        <taxon>Saccharomyces</taxon>
    </lineage>
</organism>
<keyword id="KW-0002">3D-structure</keyword>
<keyword id="KW-0274">FAD</keyword>
<keyword id="KW-0285">Flavoprotein</keyword>
<keyword id="KW-0560">Oxidoreductase</keyword>
<keyword id="KW-1185">Reference proteome</keyword>
<sequence length="508" mass="57806">MNTVSPAKKKVIIIGAGIAGLKAASTLHQNGIQDCLVLEARDRVGGRLQTVTGYQGRKYDIGASWHHDTLTNPLFLEEAQLSLNDGRTRFVFDDDNFIYIDEERGRVDHDKELLLEIVDNEMSKFAELEFHQHLGVSDCSFFQLVMKYLLQRRQFLTNDQIRYLPQLCRYLELWHGLDWKLLSAKDTYFGHQGRNAFALNYDSVVQRIAQSFPQNWLKLSCEVKSITREPSKNVTVNCEDGTVYNADYVIITVPQSVLNLSVQPEKNLRGRIEFQPPLKPVIQDAFDKIHFGALGKVIFEFEECCWSNESSKIVTLANSTNEFVEIVRNAENLDELDSMLEREDSQKHTSVTCWSQPLFFVNLSKSTGVASFMMLMQAPLTNHIESIREDKERLFSFFQPVLNKIMKCLDSEDVIDGMRPIENIANANKPVLRNIIVSNWTRDPYSRGAYSACFPGDDPVDMVVAMSNGQDSRIRFAGEHTIMDGAGCAYGAWESGRREATRISDLLK</sequence>
<reference key="1">
    <citation type="journal article" date="1996" name="Curr. Genet.">
        <title>Characterization of the Saccharomyces cerevisiae FMS1 gene related to Candida albicans corticosteroid-binding protein 1.</title>
        <authorList>
            <person name="Joets J."/>
            <person name="Pousset D."/>
            <person name="Marcireau C."/>
            <person name="Karst F."/>
        </authorList>
    </citation>
    <scope>NUCLEOTIDE SEQUENCE [GENOMIC DNA]</scope>
</reference>
<reference key="2">
    <citation type="journal article" date="1997" name="Nature">
        <title>The nucleotide sequence of Saccharomyces cerevisiae chromosome XIII.</title>
        <authorList>
            <person name="Bowman S."/>
            <person name="Churcher C.M."/>
            <person name="Badcock K."/>
            <person name="Brown D."/>
            <person name="Chillingworth T."/>
            <person name="Connor R."/>
            <person name="Dedman K."/>
            <person name="Devlin K."/>
            <person name="Gentles S."/>
            <person name="Hamlin N."/>
            <person name="Hunt S."/>
            <person name="Jagels K."/>
            <person name="Lye G."/>
            <person name="Moule S."/>
            <person name="Odell C."/>
            <person name="Pearson D."/>
            <person name="Rajandream M.A."/>
            <person name="Rice P."/>
            <person name="Skelton J."/>
            <person name="Walsh S.V."/>
            <person name="Whitehead S."/>
            <person name="Barrell B.G."/>
        </authorList>
    </citation>
    <scope>NUCLEOTIDE SEQUENCE [LARGE SCALE GENOMIC DNA]</scope>
    <source>
        <strain>ATCC 204508 / S288c</strain>
    </source>
</reference>
<reference key="3">
    <citation type="journal article" date="2014" name="G3 (Bethesda)">
        <title>The reference genome sequence of Saccharomyces cerevisiae: Then and now.</title>
        <authorList>
            <person name="Engel S.R."/>
            <person name="Dietrich F.S."/>
            <person name="Fisk D.G."/>
            <person name="Binkley G."/>
            <person name="Balakrishnan R."/>
            <person name="Costanzo M.C."/>
            <person name="Dwight S.S."/>
            <person name="Hitz B.C."/>
            <person name="Karra K."/>
            <person name="Nash R.S."/>
            <person name="Weng S."/>
            <person name="Wong E.D."/>
            <person name="Lloyd P."/>
            <person name="Skrzypek M.S."/>
            <person name="Miyasato S.R."/>
            <person name="Simison M."/>
            <person name="Cherry J.M."/>
        </authorList>
    </citation>
    <scope>GENOME REANNOTATION</scope>
    <source>
        <strain>ATCC 204508 / S288c</strain>
    </source>
</reference>
<reference key="4">
    <citation type="journal article" date="2003" name="Biochem. Biophys. Res. Commun.">
        <title>Yeast Fms1 is a FAD-utilizing polyamine oxidase.</title>
        <authorList>
            <person name="Landry J."/>
            <person name="Sternglanz R."/>
        </authorList>
    </citation>
    <scope>FUNCTION</scope>
    <scope>CATALYTIC ACTIVITY</scope>
    <scope>COFACTOR</scope>
</reference>
<reference key="5">
    <citation type="journal article" date="2003" name="Nature">
        <title>Global analysis of protein expression in yeast.</title>
        <authorList>
            <person name="Ghaemmaghami S."/>
            <person name="Huh W.-K."/>
            <person name="Bower K."/>
            <person name="Howson R.W."/>
            <person name="Belle A."/>
            <person name="Dephoure N."/>
            <person name="O'Shea E.K."/>
            <person name="Weissman J.S."/>
        </authorList>
    </citation>
    <scope>LEVEL OF PROTEIN EXPRESSION [LARGE SCALE ANALYSIS]</scope>
</reference>
<reference key="6">
    <citation type="journal article" date="2003" name="Proc. Natl. Acad. Sci. U.S.A.">
        <title>Spermidine but not spermine is essential for hypusine biosynthesis and growth in Saccharomyces cerevisiae: spermine is converted to spermidine in vivo by the FMS1-amine oxidase.</title>
        <authorList>
            <person name="Chattopadhyay M.K."/>
            <person name="Tabor C.W."/>
            <person name="Tabor H."/>
        </authorList>
    </citation>
    <scope>FUNCTION</scope>
</reference>
<accession>P50264</accession>
<accession>D6VZJ4</accession>
<comment type="function">
    <text evidence="1 3">Involved in the production of beta-alanine, a precursor of pantothenic acid. Multicopy suppressor of fenpropimorph resistance.</text>
</comment>
<comment type="catalytic activity">
    <reaction evidence="1">
        <text>spermine + O2 + H2O = 3-aminopropanal + spermidine + H2O2</text>
        <dbReference type="Rhea" id="RHEA:25804"/>
        <dbReference type="ChEBI" id="CHEBI:15377"/>
        <dbReference type="ChEBI" id="CHEBI:15379"/>
        <dbReference type="ChEBI" id="CHEBI:16240"/>
        <dbReference type="ChEBI" id="CHEBI:45725"/>
        <dbReference type="ChEBI" id="CHEBI:57834"/>
        <dbReference type="ChEBI" id="CHEBI:58374"/>
        <dbReference type="EC" id="1.5.3.17"/>
    </reaction>
</comment>
<comment type="catalytic activity">
    <reaction evidence="1">
        <text>spermidine + O2 + H2O = 3-aminopropanal + putrescine + H2O2</text>
        <dbReference type="Rhea" id="RHEA:25808"/>
        <dbReference type="ChEBI" id="CHEBI:15377"/>
        <dbReference type="ChEBI" id="CHEBI:15379"/>
        <dbReference type="ChEBI" id="CHEBI:16240"/>
        <dbReference type="ChEBI" id="CHEBI:57834"/>
        <dbReference type="ChEBI" id="CHEBI:58374"/>
        <dbReference type="ChEBI" id="CHEBI:326268"/>
        <dbReference type="EC" id="1.5.3.17"/>
    </reaction>
</comment>
<comment type="catalytic activity">
    <reaction evidence="1">
        <text>N(1)-acetylspermine + O2 + H2O = 3-acetamidopropanal + spermidine + H2O2</text>
        <dbReference type="Rhea" id="RHEA:25800"/>
        <dbReference type="ChEBI" id="CHEBI:15377"/>
        <dbReference type="ChEBI" id="CHEBI:15379"/>
        <dbReference type="ChEBI" id="CHEBI:16240"/>
        <dbReference type="ChEBI" id="CHEBI:30322"/>
        <dbReference type="ChEBI" id="CHEBI:57834"/>
        <dbReference type="ChEBI" id="CHEBI:58101"/>
        <dbReference type="EC" id="1.5.3.17"/>
    </reaction>
</comment>
<comment type="catalytic activity">
    <reaction evidence="1">
        <text>N(1)-acetylspermidine + O2 + H2O = 3-acetamidopropanal + putrescine + H2O2</text>
        <dbReference type="Rhea" id="RHEA:25812"/>
        <dbReference type="ChEBI" id="CHEBI:15377"/>
        <dbReference type="ChEBI" id="CHEBI:15379"/>
        <dbReference type="ChEBI" id="CHEBI:16240"/>
        <dbReference type="ChEBI" id="CHEBI:30322"/>
        <dbReference type="ChEBI" id="CHEBI:58324"/>
        <dbReference type="ChEBI" id="CHEBI:326268"/>
        <dbReference type="EC" id="1.5.3.17"/>
    </reaction>
</comment>
<comment type="catalytic activity">
    <reaction evidence="1">
        <text>N(8)-acetylspermidine + O2 + H2O = 4-acetamidobutanal + propane-1,3-diamine + H2O2</text>
        <dbReference type="Rhea" id="RHEA:25972"/>
        <dbReference type="ChEBI" id="CHEBI:7386"/>
        <dbReference type="ChEBI" id="CHEBI:15377"/>
        <dbReference type="ChEBI" id="CHEBI:15379"/>
        <dbReference type="ChEBI" id="CHEBI:16240"/>
        <dbReference type="ChEBI" id="CHEBI:57484"/>
        <dbReference type="ChEBI" id="CHEBI:58535"/>
        <dbReference type="EC" id="1.5.3.17"/>
    </reaction>
</comment>
<comment type="cofactor">
    <cofactor evidence="1">
        <name>FAD</name>
        <dbReference type="ChEBI" id="CHEBI:57692"/>
    </cofactor>
    <text evidence="1">Binds 1 FAD per subunit.</text>
</comment>
<comment type="miscellaneous">
    <text evidence="2">Present with 6960 molecules/cell in log phase SD medium.</text>
</comment>
<comment type="similarity">
    <text evidence="4">Belongs to the flavin monoamine oxidase family.</text>
</comment>
<gene>
    <name type="primary">FMS1</name>
    <name type="ordered locus">YMR020W</name>
    <name type="ORF">YM9711.09</name>
</gene>
<name>FMS1_YEAST</name>
<proteinExistence type="evidence at protein level"/>
<evidence type="ECO:0000269" key="1">
    <source>
    </source>
</evidence>
<evidence type="ECO:0000269" key="2">
    <source>
    </source>
</evidence>
<evidence type="ECO:0000269" key="3">
    <source>
    </source>
</evidence>
<evidence type="ECO:0000305" key="4"/>
<evidence type="ECO:0007829" key="5">
    <source>
        <dbReference type="PDB" id="1RSG"/>
    </source>
</evidence>
<evidence type="ECO:0007829" key="6">
    <source>
        <dbReference type="PDB" id="3BI4"/>
    </source>
</evidence>
<evidence type="ECO:0007829" key="7">
    <source>
        <dbReference type="PDB" id="3BNM"/>
    </source>
</evidence>
<evidence type="ECO:0007829" key="8">
    <source>
        <dbReference type="PDB" id="3BNU"/>
    </source>
</evidence>
<evidence type="ECO:0007829" key="9">
    <source>
        <dbReference type="PDB" id="3CN8"/>
    </source>
</evidence>
<evidence type="ECO:0007829" key="10">
    <source>
        <dbReference type="PDB" id="3CND"/>
    </source>
</evidence>
<evidence type="ECO:0007829" key="11">
    <source>
        <dbReference type="PDB" id="3CNT"/>
    </source>
</evidence>
<evidence type="ECO:0007829" key="12">
    <source>
        <dbReference type="PDB" id="4ECH"/>
    </source>
</evidence>
<evidence type="ECO:0007829" key="13">
    <source>
        <dbReference type="PDB" id="4GDP"/>
    </source>
</evidence>